<dbReference type="EMBL" id="AF229637">
    <property type="protein sequence ID" value="AAF66951.1"/>
    <property type="molecule type" value="mRNA"/>
</dbReference>
<dbReference type="EMBL" id="AK010536">
    <property type="protein sequence ID" value="BAB27013.1"/>
    <property type="molecule type" value="mRNA"/>
</dbReference>
<dbReference type="EMBL" id="AK039573">
    <property type="protein sequence ID" value="BAC30390.1"/>
    <property type="molecule type" value="mRNA"/>
</dbReference>
<dbReference type="EMBL" id="AL672231">
    <property type="status" value="NOT_ANNOTATED_CDS"/>
    <property type="molecule type" value="Genomic_DNA"/>
</dbReference>
<dbReference type="EMBL" id="BC011195">
    <property type="protein sequence ID" value="AAH11195.1"/>
    <property type="molecule type" value="mRNA"/>
</dbReference>
<dbReference type="CCDS" id="CCDS29966.1"/>
<dbReference type="RefSeq" id="NP_613069.3">
    <property type="nucleotide sequence ID" value="NM_138603.3"/>
</dbReference>
<dbReference type="SMR" id="Q9JIG7"/>
<dbReference type="BioGRID" id="207701">
    <property type="interactions" value="17"/>
</dbReference>
<dbReference type="FunCoup" id="Q9JIG7">
    <property type="interactions" value="595"/>
</dbReference>
<dbReference type="IntAct" id="Q9JIG7">
    <property type="interactions" value="5"/>
</dbReference>
<dbReference type="MINT" id="Q9JIG7"/>
<dbReference type="STRING" id="10090.ENSMUSP00000033483"/>
<dbReference type="iPTMnet" id="Q9JIG7"/>
<dbReference type="PhosphoSitePlus" id="Q9JIG7"/>
<dbReference type="SwissPalm" id="Q9JIG7"/>
<dbReference type="PaxDb" id="10090-ENSMUSP00000033483"/>
<dbReference type="PeptideAtlas" id="Q9JIG7"/>
<dbReference type="ProteomicsDB" id="281416"/>
<dbReference type="Pumba" id="Q9JIG7"/>
<dbReference type="Antibodypedia" id="368">
    <property type="antibodies" value="193 antibodies from 30 providers"/>
</dbReference>
<dbReference type="DNASU" id="54638"/>
<dbReference type="Ensembl" id="ENSMUST00000033483.5">
    <property type="protein sequence ID" value="ENSMUSP00000033483.5"/>
    <property type="gene ID" value="ENSMUSG00000031143.5"/>
</dbReference>
<dbReference type="GeneID" id="54638"/>
<dbReference type="KEGG" id="mmu:54638"/>
<dbReference type="UCSC" id="uc009sln.1">
    <property type="organism name" value="mouse"/>
</dbReference>
<dbReference type="AGR" id="MGI:1859608"/>
<dbReference type="CTD" id="28952"/>
<dbReference type="MGI" id="MGI:1859608">
    <property type="gene designation" value="Ccdc22"/>
</dbReference>
<dbReference type="VEuPathDB" id="HostDB:ENSMUSG00000031143"/>
<dbReference type="eggNOG" id="KOG1937">
    <property type="taxonomic scope" value="Eukaryota"/>
</dbReference>
<dbReference type="GeneTree" id="ENSGT00390000003809"/>
<dbReference type="HOGENOM" id="CLU_024231_1_0_1"/>
<dbReference type="InParanoid" id="Q9JIG7"/>
<dbReference type="OMA" id="KFEQHIQ"/>
<dbReference type="OrthoDB" id="10266736at2759"/>
<dbReference type="PhylomeDB" id="Q9JIG7"/>
<dbReference type="TreeFam" id="TF325575"/>
<dbReference type="Reactome" id="R-MMU-8951664">
    <property type="pathway name" value="Neddylation"/>
</dbReference>
<dbReference type="BioGRID-ORCS" id="54638">
    <property type="hits" value="6 hits in 78 CRISPR screens"/>
</dbReference>
<dbReference type="ChiTaRS" id="Ccdc22">
    <property type="organism name" value="mouse"/>
</dbReference>
<dbReference type="PRO" id="PR:Q9JIG7"/>
<dbReference type="Proteomes" id="UP000000589">
    <property type="component" value="Chromosome X"/>
</dbReference>
<dbReference type="RNAct" id="Q9JIG7">
    <property type="molecule type" value="protein"/>
</dbReference>
<dbReference type="Bgee" id="ENSMUSG00000031143">
    <property type="expression patterns" value="Expressed in interventricular septum and 253 other cell types or tissues"/>
</dbReference>
<dbReference type="GO" id="GO:0005813">
    <property type="term" value="C:centrosome"/>
    <property type="evidence" value="ECO:0000250"/>
    <property type="project" value="UniProtKB"/>
</dbReference>
<dbReference type="GO" id="GO:0005768">
    <property type="term" value="C:endosome"/>
    <property type="evidence" value="ECO:0007669"/>
    <property type="project" value="UniProtKB-SubCell"/>
</dbReference>
<dbReference type="GO" id="GO:0097602">
    <property type="term" value="F:cullin family protein binding"/>
    <property type="evidence" value="ECO:0007669"/>
    <property type="project" value="Ensembl"/>
</dbReference>
<dbReference type="GO" id="GO:0042632">
    <property type="term" value="P:cholesterol homeostasis"/>
    <property type="evidence" value="ECO:0000266"/>
    <property type="project" value="MGI"/>
</dbReference>
<dbReference type="GO" id="GO:0032456">
    <property type="term" value="P:endocytic recycling"/>
    <property type="evidence" value="ECO:0000250"/>
    <property type="project" value="UniProtKB"/>
</dbReference>
<dbReference type="GO" id="GO:0006893">
    <property type="term" value="P:Golgi to plasma membrane transport"/>
    <property type="evidence" value="ECO:0007669"/>
    <property type="project" value="Ensembl"/>
</dbReference>
<dbReference type="GO" id="GO:0006878">
    <property type="term" value="P:intracellular copper ion homeostasis"/>
    <property type="evidence" value="ECO:0007669"/>
    <property type="project" value="Ensembl"/>
</dbReference>
<dbReference type="GO" id="GO:0043124">
    <property type="term" value="P:negative regulation of canonical NF-kappaB signal transduction"/>
    <property type="evidence" value="ECO:0007669"/>
    <property type="project" value="Ensembl"/>
</dbReference>
<dbReference type="GO" id="GO:0043123">
    <property type="term" value="P:positive regulation of canonical NF-kappaB signal transduction"/>
    <property type="evidence" value="ECO:0007669"/>
    <property type="project" value="Ensembl"/>
</dbReference>
<dbReference type="GO" id="GO:2000060">
    <property type="term" value="P:positive regulation of ubiquitin-dependent protein catabolic process"/>
    <property type="evidence" value="ECO:0007669"/>
    <property type="project" value="Ensembl"/>
</dbReference>
<dbReference type="GO" id="GO:0015031">
    <property type="term" value="P:protein transport"/>
    <property type="evidence" value="ECO:0007669"/>
    <property type="project" value="UniProtKB-KW"/>
</dbReference>
<dbReference type="GO" id="GO:0097006">
    <property type="term" value="P:regulation of plasma lipoprotein particle levels"/>
    <property type="evidence" value="ECO:0000266"/>
    <property type="project" value="MGI"/>
</dbReference>
<dbReference type="InterPro" id="IPR008530">
    <property type="entry name" value="CCDC22"/>
</dbReference>
<dbReference type="InterPro" id="IPR048348">
    <property type="entry name" value="CCDC22_CC"/>
</dbReference>
<dbReference type="InterPro" id="IPR048349">
    <property type="entry name" value="CCDC22_N"/>
</dbReference>
<dbReference type="PANTHER" id="PTHR15668:SF4">
    <property type="entry name" value="COILED-COIL DOMAIN-CONTAINING PROTEIN 22"/>
    <property type="match status" value="1"/>
</dbReference>
<dbReference type="PANTHER" id="PTHR15668">
    <property type="entry name" value="JM1 PROTEIN"/>
    <property type="match status" value="1"/>
</dbReference>
<dbReference type="Pfam" id="PF05667">
    <property type="entry name" value="CCDC22_CC"/>
    <property type="match status" value="1"/>
</dbReference>
<dbReference type="Pfam" id="PF21674">
    <property type="entry name" value="CCDC22_N"/>
    <property type="match status" value="1"/>
</dbReference>
<reference key="1">
    <citation type="journal article" date="2000" name="Genomics">
        <title>A transcript map of a 2-Mb BAC contig in the proximal portion of the mouse X chromosome and regional mapping of the scurfy mutation.</title>
        <authorList>
            <person name="Means G.D."/>
            <person name="Toy D.Y."/>
            <person name="Baum P.R."/>
            <person name="Derry J.M.J."/>
        </authorList>
    </citation>
    <scope>NUCLEOTIDE SEQUENCE [MRNA]</scope>
</reference>
<reference key="2">
    <citation type="journal article" date="2005" name="Science">
        <title>The transcriptional landscape of the mammalian genome.</title>
        <authorList>
            <person name="Carninci P."/>
            <person name="Kasukawa T."/>
            <person name="Katayama S."/>
            <person name="Gough J."/>
            <person name="Frith M.C."/>
            <person name="Maeda N."/>
            <person name="Oyama R."/>
            <person name="Ravasi T."/>
            <person name="Lenhard B."/>
            <person name="Wells C."/>
            <person name="Kodzius R."/>
            <person name="Shimokawa K."/>
            <person name="Bajic V.B."/>
            <person name="Brenner S.E."/>
            <person name="Batalov S."/>
            <person name="Forrest A.R."/>
            <person name="Zavolan M."/>
            <person name="Davis M.J."/>
            <person name="Wilming L.G."/>
            <person name="Aidinis V."/>
            <person name="Allen J.E."/>
            <person name="Ambesi-Impiombato A."/>
            <person name="Apweiler R."/>
            <person name="Aturaliya R.N."/>
            <person name="Bailey T.L."/>
            <person name="Bansal M."/>
            <person name="Baxter L."/>
            <person name="Beisel K.W."/>
            <person name="Bersano T."/>
            <person name="Bono H."/>
            <person name="Chalk A.M."/>
            <person name="Chiu K.P."/>
            <person name="Choudhary V."/>
            <person name="Christoffels A."/>
            <person name="Clutterbuck D.R."/>
            <person name="Crowe M.L."/>
            <person name="Dalla E."/>
            <person name="Dalrymple B.P."/>
            <person name="de Bono B."/>
            <person name="Della Gatta G."/>
            <person name="di Bernardo D."/>
            <person name="Down T."/>
            <person name="Engstrom P."/>
            <person name="Fagiolini M."/>
            <person name="Faulkner G."/>
            <person name="Fletcher C.F."/>
            <person name="Fukushima T."/>
            <person name="Furuno M."/>
            <person name="Futaki S."/>
            <person name="Gariboldi M."/>
            <person name="Georgii-Hemming P."/>
            <person name="Gingeras T.R."/>
            <person name="Gojobori T."/>
            <person name="Green R.E."/>
            <person name="Gustincich S."/>
            <person name="Harbers M."/>
            <person name="Hayashi Y."/>
            <person name="Hensch T.K."/>
            <person name="Hirokawa N."/>
            <person name="Hill D."/>
            <person name="Huminiecki L."/>
            <person name="Iacono M."/>
            <person name="Ikeo K."/>
            <person name="Iwama A."/>
            <person name="Ishikawa T."/>
            <person name="Jakt M."/>
            <person name="Kanapin A."/>
            <person name="Katoh M."/>
            <person name="Kawasawa Y."/>
            <person name="Kelso J."/>
            <person name="Kitamura H."/>
            <person name="Kitano H."/>
            <person name="Kollias G."/>
            <person name="Krishnan S.P."/>
            <person name="Kruger A."/>
            <person name="Kummerfeld S.K."/>
            <person name="Kurochkin I.V."/>
            <person name="Lareau L.F."/>
            <person name="Lazarevic D."/>
            <person name="Lipovich L."/>
            <person name="Liu J."/>
            <person name="Liuni S."/>
            <person name="McWilliam S."/>
            <person name="Madan Babu M."/>
            <person name="Madera M."/>
            <person name="Marchionni L."/>
            <person name="Matsuda H."/>
            <person name="Matsuzawa S."/>
            <person name="Miki H."/>
            <person name="Mignone F."/>
            <person name="Miyake S."/>
            <person name="Morris K."/>
            <person name="Mottagui-Tabar S."/>
            <person name="Mulder N."/>
            <person name="Nakano N."/>
            <person name="Nakauchi H."/>
            <person name="Ng P."/>
            <person name="Nilsson R."/>
            <person name="Nishiguchi S."/>
            <person name="Nishikawa S."/>
            <person name="Nori F."/>
            <person name="Ohara O."/>
            <person name="Okazaki Y."/>
            <person name="Orlando V."/>
            <person name="Pang K.C."/>
            <person name="Pavan W.J."/>
            <person name="Pavesi G."/>
            <person name="Pesole G."/>
            <person name="Petrovsky N."/>
            <person name="Piazza S."/>
            <person name="Reed J."/>
            <person name="Reid J.F."/>
            <person name="Ring B.Z."/>
            <person name="Ringwald M."/>
            <person name="Rost B."/>
            <person name="Ruan Y."/>
            <person name="Salzberg S.L."/>
            <person name="Sandelin A."/>
            <person name="Schneider C."/>
            <person name="Schoenbach C."/>
            <person name="Sekiguchi K."/>
            <person name="Semple C.A."/>
            <person name="Seno S."/>
            <person name="Sessa L."/>
            <person name="Sheng Y."/>
            <person name="Shibata Y."/>
            <person name="Shimada H."/>
            <person name="Shimada K."/>
            <person name="Silva D."/>
            <person name="Sinclair B."/>
            <person name="Sperling S."/>
            <person name="Stupka E."/>
            <person name="Sugiura K."/>
            <person name="Sultana R."/>
            <person name="Takenaka Y."/>
            <person name="Taki K."/>
            <person name="Tammoja K."/>
            <person name="Tan S.L."/>
            <person name="Tang S."/>
            <person name="Taylor M.S."/>
            <person name="Tegner J."/>
            <person name="Teichmann S.A."/>
            <person name="Ueda H.R."/>
            <person name="van Nimwegen E."/>
            <person name="Verardo R."/>
            <person name="Wei C.L."/>
            <person name="Yagi K."/>
            <person name="Yamanishi H."/>
            <person name="Zabarovsky E."/>
            <person name="Zhu S."/>
            <person name="Zimmer A."/>
            <person name="Hide W."/>
            <person name="Bult C."/>
            <person name="Grimmond S.M."/>
            <person name="Teasdale R.D."/>
            <person name="Liu E.T."/>
            <person name="Brusic V."/>
            <person name="Quackenbush J."/>
            <person name="Wahlestedt C."/>
            <person name="Mattick J.S."/>
            <person name="Hume D.A."/>
            <person name="Kai C."/>
            <person name="Sasaki D."/>
            <person name="Tomaru Y."/>
            <person name="Fukuda S."/>
            <person name="Kanamori-Katayama M."/>
            <person name="Suzuki M."/>
            <person name="Aoki J."/>
            <person name="Arakawa T."/>
            <person name="Iida J."/>
            <person name="Imamura K."/>
            <person name="Itoh M."/>
            <person name="Kato T."/>
            <person name="Kawaji H."/>
            <person name="Kawagashira N."/>
            <person name="Kawashima T."/>
            <person name="Kojima M."/>
            <person name="Kondo S."/>
            <person name="Konno H."/>
            <person name="Nakano K."/>
            <person name="Ninomiya N."/>
            <person name="Nishio T."/>
            <person name="Okada M."/>
            <person name="Plessy C."/>
            <person name="Shibata K."/>
            <person name="Shiraki T."/>
            <person name="Suzuki S."/>
            <person name="Tagami M."/>
            <person name="Waki K."/>
            <person name="Watahiki A."/>
            <person name="Okamura-Oho Y."/>
            <person name="Suzuki H."/>
            <person name="Kawai J."/>
            <person name="Hayashizaki Y."/>
        </authorList>
    </citation>
    <scope>NUCLEOTIDE SEQUENCE [LARGE SCALE MRNA]</scope>
    <source>
        <strain>C57BL/6J</strain>
        <tissue>Spinal cord</tissue>
    </source>
</reference>
<reference key="3">
    <citation type="journal article" date="2009" name="PLoS Biol.">
        <title>Lineage-specific biology revealed by a finished genome assembly of the mouse.</title>
        <authorList>
            <person name="Church D.M."/>
            <person name="Goodstadt L."/>
            <person name="Hillier L.W."/>
            <person name="Zody M.C."/>
            <person name="Goldstein S."/>
            <person name="She X."/>
            <person name="Bult C.J."/>
            <person name="Agarwala R."/>
            <person name="Cherry J.L."/>
            <person name="DiCuccio M."/>
            <person name="Hlavina W."/>
            <person name="Kapustin Y."/>
            <person name="Meric P."/>
            <person name="Maglott D."/>
            <person name="Birtle Z."/>
            <person name="Marques A.C."/>
            <person name="Graves T."/>
            <person name="Zhou S."/>
            <person name="Teague B."/>
            <person name="Potamousis K."/>
            <person name="Churas C."/>
            <person name="Place M."/>
            <person name="Herschleb J."/>
            <person name="Runnheim R."/>
            <person name="Forrest D."/>
            <person name="Amos-Landgraf J."/>
            <person name="Schwartz D.C."/>
            <person name="Cheng Z."/>
            <person name="Lindblad-Toh K."/>
            <person name="Eichler E.E."/>
            <person name="Ponting C.P."/>
        </authorList>
    </citation>
    <scope>NUCLEOTIDE SEQUENCE [LARGE SCALE GENOMIC DNA]</scope>
    <source>
        <strain>C57BL/6J</strain>
    </source>
</reference>
<reference key="4">
    <citation type="journal article" date="2004" name="Genome Res.">
        <title>The status, quality, and expansion of the NIH full-length cDNA project: the Mammalian Gene Collection (MGC).</title>
        <authorList>
            <consortium name="The MGC Project Team"/>
        </authorList>
    </citation>
    <scope>NUCLEOTIDE SEQUENCE [LARGE SCALE MRNA]</scope>
    <source>
        <strain>FVB/N</strain>
        <tissue>Salivary gland</tissue>
    </source>
</reference>
<reference key="5">
    <citation type="journal article" date="2003" name="J. Biol. Chem.">
        <title>Identification of targets for calcium signaling through the copine family of proteins. Characterization of a coiled-coil copine-binding motif.</title>
        <authorList>
            <person name="Tomsig J.L."/>
            <person name="Snyder S.L."/>
            <person name="Creutz C.E."/>
        </authorList>
    </citation>
    <scope>INTERACTION WITH CPNE1 AND CPNE4</scope>
</reference>
<reference key="6">
    <citation type="journal article" date="2010" name="Cell">
        <title>A tissue-specific atlas of mouse protein phosphorylation and expression.</title>
        <authorList>
            <person name="Huttlin E.L."/>
            <person name="Jedrychowski M.P."/>
            <person name="Elias J.E."/>
            <person name="Goswami T."/>
            <person name="Rad R."/>
            <person name="Beausoleil S.A."/>
            <person name="Villen J."/>
            <person name="Haas W."/>
            <person name="Sowa M.E."/>
            <person name="Gygi S.P."/>
        </authorList>
    </citation>
    <scope>IDENTIFICATION BY MASS SPECTROMETRY [LARGE SCALE ANALYSIS]</scope>
    <source>
        <tissue>Brain</tissue>
        <tissue>Brown adipose tissue</tissue>
        <tissue>Heart</tissue>
        <tissue>Kidney</tissue>
        <tissue>Liver</tissue>
        <tissue>Lung</tissue>
        <tissue>Pancreas</tissue>
        <tissue>Spleen</tissue>
        <tissue>Testis</tissue>
    </source>
</reference>
<organism>
    <name type="scientific">Mus musculus</name>
    <name type="common">Mouse</name>
    <dbReference type="NCBI Taxonomy" id="10090"/>
    <lineage>
        <taxon>Eukaryota</taxon>
        <taxon>Metazoa</taxon>
        <taxon>Chordata</taxon>
        <taxon>Craniata</taxon>
        <taxon>Vertebrata</taxon>
        <taxon>Euteleostomi</taxon>
        <taxon>Mammalia</taxon>
        <taxon>Eutheria</taxon>
        <taxon>Euarchontoglires</taxon>
        <taxon>Glires</taxon>
        <taxon>Rodentia</taxon>
        <taxon>Myomorpha</taxon>
        <taxon>Muroidea</taxon>
        <taxon>Muridae</taxon>
        <taxon>Murinae</taxon>
        <taxon>Mus</taxon>
        <taxon>Mus</taxon>
    </lineage>
</organism>
<evidence type="ECO:0000250" key="1">
    <source>
        <dbReference type="UniProtKB" id="O60826"/>
    </source>
</evidence>
<evidence type="ECO:0000255" key="2"/>
<evidence type="ECO:0000269" key="3">
    <source>
    </source>
</evidence>
<evidence type="ECO:0000305" key="4"/>
<protein>
    <recommendedName>
        <fullName>Coiled-coil domain-containing protein 22</fullName>
    </recommendedName>
</protein>
<gene>
    <name type="primary">Ccdc22</name>
    <name type="synonym">DXImx40e</name>
</gene>
<comment type="function">
    <text evidence="1">Component of the commander complex that is essential for endosomal recycling of transmembrane cargos; the Commander complex is composed of composed of the CCC subcomplex and the retriever subcomplex (By similarity). Component of the CCC complex, which is involved in the regulation of endosomal recycling of surface proteins, including integrins, signaling receptor and channels (By similarity). Involved in regulation of NF-kappa-B signaling (By similarity). Promotes ubiquitination of I-kappa-B-kinase subunit IKBKB and its subsequent proteasomal degradation leading to NF-kappa-B activation; the function may involve association with COMMD8 and a CUL1-dependent E3 ubiquitin ligase complex (By similarity). May down-regulate NF-kappa-B activity via association with COMMD1 and involving a CUL2-dependent E3 ubiquitin ligase complex. Regulates the cellular localization of COMM domain-containing proteins, such as COMMD1 and COMMD10 (By similarity). Component of the CCC complex, which is involved in the regulation of endosomal recycling of surface proteins, including integrins, signaling receptor and channels. The CCC complex associates with SNX17, retriever and WASH complexes to prevent lysosomal degradation and promote cell surface recycling of numerous cargos such as integrins ITGA5:ITGB1 (By similarity). Plays a role in copper ion homeostasis (By similarity). Involved in copper-dependent ATP7A trafficking between the trans-Golgi network and vesicles in the cell periphery; the function is proposed to depend on its association within the CCC complex and cooperation with the WASH complex on early endosomes (By similarity).</text>
</comment>
<comment type="subunit">
    <text evidence="1 3">Component of the commander complex consisting of the CCC subcomplex and the retriever subcomplex (By similarity). Component of the CCC (COMMD/CCDC22/CCDC93) subcomplex consisting of COMMD1, COMMD2, COMMD3, COMMD4, COMMD5, COMMD6, COMMD7, COMMD8, COMMD9, COMMD10, CCDC22 and CCDC93 (By similarity). Forms a coiled-coil heterodimer with CCDC22; this heterodimer interacts with the guanine nucleotide exchange factor DENND10; the interaction is direct (By similarity). Interacts with CUL1, CUL2, CUL3, SKP1, BTRC (By similarity). Interacts with SNX17 and SNX31 (By similarity). Interacts with CPNE1 and CPNE4 (PubMed:12522145).</text>
</comment>
<comment type="subcellular location">
    <subcellularLocation>
        <location evidence="1">Endosome</location>
    </subcellularLocation>
    <subcellularLocation>
        <location evidence="1">Cytoplasm</location>
        <location evidence="1">Cytoskeleton</location>
        <location evidence="1">Microtubule organizing center</location>
        <location evidence="1">Centrosome</location>
    </subcellularLocation>
</comment>
<comment type="similarity">
    <text evidence="4">Belongs to the CCDC22 family.</text>
</comment>
<name>CCD22_MOUSE</name>
<feature type="chain" id="PRO_0000076200" description="Coiled-coil domain-containing protein 22">
    <location>
        <begin position="1"/>
        <end position="627"/>
    </location>
</feature>
<feature type="region of interest" description="Sufficicient and required for interaction with CCDC93" evidence="1">
    <location>
        <begin position="1"/>
        <end position="447"/>
    </location>
</feature>
<feature type="region of interest" description="Sufficient for interaction with COMMD1" evidence="1">
    <location>
        <begin position="1"/>
        <end position="321"/>
    </location>
</feature>
<feature type="coiled-coil region" evidence="2">
    <location>
        <begin position="448"/>
        <end position="535"/>
    </location>
</feature>
<feature type="modified residue" description="Phosphoserine" evidence="1">
    <location>
        <position position="410"/>
    </location>
</feature>
<feature type="sequence conflict" description="In Ref. 2; BAC30390." evidence="4" ref="2">
    <original>D</original>
    <variation>N</variation>
    <location>
        <position position="117"/>
    </location>
</feature>
<feature type="sequence conflict" description="In Ref. 2; BAC30390." evidence="4" ref="2">
    <original>S</original>
    <variation>F</variation>
    <location>
        <position position="529"/>
    </location>
</feature>
<keyword id="KW-0175">Coiled coil</keyword>
<keyword id="KW-0963">Cytoplasm</keyword>
<keyword id="KW-0206">Cytoskeleton</keyword>
<keyword id="KW-0967">Endosome</keyword>
<keyword id="KW-0597">Phosphoprotein</keyword>
<keyword id="KW-0653">Protein transport</keyword>
<keyword id="KW-1185">Reference proteome</keyword>
<keyword id="KW-0813">Transport</keyword>
<keyword id="KW-0833">Ubl conjugation pathway</keyword>
<proteinExistence type="evidence at protein level"/>
<sequence>MEEADRILIHSLRQAGTAVPPEVQTLRAFTTELVVEAVVRCLRVINPDVGSGLSHLLPPAMSARFRLAMSLAQACMDLGYPLELGYQNFLYPSEPDLRDLLLFLAERLPSDASEDADQPAGDSAIFLRAIGSQIRDQLALPWVPPLLRTPKVQRLQGSALQQPFHSSRLVLPELNSSGELWEFQASPLLLPAPTQVPQLQGRAASLLEHHASQLCQHVNRDCPGDEDRVRWASRVPSQEDSRAPQQRLHKQLIEHLRQSWGPLGAPTQVRDLGEMLQTWGARAMTGVPKGSRFTHSEKFTFHLEPQVQAAQVADVPATSQRLEQDTRAAQEQELESLREQLASVNHNIEEVEADMKTLGINLVQVETECRQSELSVAEQEQALRLKSRTVELLPDGAANLAKLQLVVESSAQRLIHLASQWEKHRVPLLAEYRHLRRLQDCRELESSRRLAEIQELHHSVRAAAEEARRKEEVYKQLVSELETLPKDVSRLAYTQRILEIVGNIRKQKEEITKILSDTKELQKEINSLSGKLDRTFAVTDELVFKDAKKDDAVRKAYKYLAALHENCSQLIQTIEDTGTIMREVRDLEEQIETEMGKKTLSNLEKICEDYRALRQENAGLLGRVREA</sequence>
<accession>Q9JIG7</accession>
<accession>B1AVA1</accession>
<accession>Q8BYH4</accession>